<sequence>MALPDFTMHQLLEAGVHFGHQTHRWNPKMTPYIYGQRNNIHIIDLAQTVPLLHQALKLVSDTVARGGRILFVGTKRQASDIIADAANRSAQYYVNARWLGGMLTNWKTISNSIQRLRKLDKILAAEAQGFTKKERLNLERDREKLNRALGGIKDMGSVPDLIFIIDTNKENIAIQEAKRLGIPVIAIIDTNCDPDNVDHPIPGNDDASRAISLYCDLFARAALDGIARQQGAMGIDLGAQADAPVDPVLENTAPVSE</sequence>
<keyword id="KW-0687">Ribonucleoprotein</keyword>
<keyword id="KW-0689">Ribosomal protein</keyword>
<dbReference type="EMBL" id="BX897699">
    <property type="protein sequence ID" value="CAF27426.1"/>
    <property type="molecule type" value="Genomic_DNA"/>
</dbReference>
<dbReference type="RefSeq" id="WP_011180546.1">
    <property type="nucleotide sequence ID" value="NZ_LRIJ02000001.1"/>
</dbReference>
<dbReference type="SMR" id="Q6G5C9"/>
<dbReference type="PaxDb" id="283166-BH06220"/>
<dbReference type="EnsemblBacteria" id="CAF27426">
    <property type="protein sequence ID" value="CAF27426"/>
    <property type="gene ID" value="BH06220"/>
</dbReference>
<dbReference type="GeneID" id="92985652"/>
<dbReference type="KEGG" id="bhe:BH06220"/>
<dbReference type="eggNOG" id="COG0052">
    <property type="taxonomic scope" value="Bacteria"/>
</dbReference>
<dbReference type="OrthoDB" id="9808036at2"/>
<dbReference type="Proteomes" id="UP000000421">
    <property type="component" value="Chromosome"/>
</dbReference>
<dbReference type="GO" id="GO:0022627">
    <property type="term" value="C:cytosolic small ribosomal subunit"/>
    <property type="evidence" value="ECO:0007669"/>
    <property type="project" value="TreeGrafter"/>
</dbReference>
<dbReference type="GO" id="GO:0003735">
    <property type="term" value="F:structural constituent of ribosome"/>
    <property type="evidence" value="ECO:0007669"/>
    <property type="project" value="InterPro"/>
</dbReference>
<dbReference type="GO" id="GO:0006412">
    <property type="term" value="P:translation"/>
    <property type="evidence" value="ECO:0007669"/>
    <property type="project" value="UniProtKB-UniRule"/>
</dbReference>
<dbReference type="CDD" id="cd01425">
    <property type="entry name" value="RPS2"/>
    <property type="match status" value="1"/>
</dbReference>
<dbReference type="Gene3D" id="3.40.50.10490">
    <property type="entry name" value="Glucose-6-phosphate isomerase like protein, domain 1"/>
    <property type="match status" value="1"/>
</dbReference>
<dbReference type="Gene3D" id="1.10.287.610">
    <property type="entry name" value="Helix hairpin bin"/>
    <property type="match status" value="1"/>
</dbReference>
<dbReference type="HAMAP" id="MF_00291_B">
    <property type="entry name" value="Ribosomal_uS2_B"/>
    <property type="match status" value="1"/>
</dbReference>
<dbReference type="InterPro" id="IPR001865">
    <property type="entry name" value="Ribosomal_uS2"/>
</dbReference>
<dbReference type="InterPro" id="IPR005706">
    <property type="entry name" value="Ribosomal_uS2_bac/mit/plastid"/>
</dbReference>
<dbReference type="InterPro" id="IPR018130">
    <property type="entry name" value="Ribosomal_uS2_CS"/>
</dbReference>
<dbReference type="InterPro" id="IPR023591">
    <property type="entry name" value="Ribosomal_uS2_flav_dom_sf"/>
</dbReference>
<dbReference type="NCBIfam" id="TIGR01011">
    <property type="entry name" value="rpsB_bact"/>
    <property type="match status" value="1"/>
</dbReference>
<dbReference type="PANTHER" id="PTHR12534">
    <property type="entry name" value="30S RIBOSOMAL PROTEIN S2 PROKARYOTIC AND ORGANELLAR"/>
    <property type="match status" value="1"/>
</dbReference>
<dbReference type="PANTHER" id="PTHR12534:SF0">
    <property type="entry name" value="SMALL RIBOSOMAL SUBUNIT PROTEIN US2M"/>
    <property type="match status" value="1"/>
</dbReference>
<dbReference type="Pfam" id="PF00318">
    <property type="entry name" value="Ribosomal_S2"/>
    <property type="match status" value="1"/>
</dbReference>
<dbReference type="PRINTS" id="PR00395">
    <property type="entry name" value="RIBOSOMALS2"/>
</dbReference>
<dbReference type="SUPFAM" id="SSF52313">
    <property type="entry name" value="Ribosomal protein S2"/>
    <property type="match status" value="1"/>
</dbReference>
<dbReference type="PROSITE" id="PS00962">
    <property type="entry name" value="RIBOSOMAL_S2_1"/>
    <property type="match status" value="1"/>
</dbReference>
<dbReference type="PROSITE" id="PS00963">
    <property type="entry name" value="RIBOSOMAL_S2_2"/>
    <property type="match status" value="1"/>
</dbReference>
<name>RS2_BARHE</name>
<evidence type="ECO:0000255" key="1">
    <source>
        <dbReference type="HAMAP-Rule" id="MF_00291"/>
    </source>
</evidence>
<evidence type="ECO:0000305" key="2"/>
<feature type="chain" id="PRO_0000134133" description="Small ribosomal subunit protein uS2">
    <location>
        <begin position="1"/>
        <end position="257"/>
    </location>
</feature>
<reference key="1">
    <citation type="journal article" date="2004" name="Proc. Natl. Acad. Sci. U.S.A.">
        <title>The louse-borne human pathogen Bartonella quintana is a genomic derivative of the zoonotic agent Bartonella henselae.</title>
        <authorList>
            <person name="Alsmark U.C.M."/>
            <person name="Frank A.C."/>
            <person name="Karlberg E.O."/>
            <person name="Legault B.-A."/>
            <person name="Ardell D.H."/>
            <person name="Canbaeck B."/>
            <person name="Eriksson A.-S."/>
            <person name="Naeslund A.K."/>
            <person name="Handley S.A."/>
            <person name="Huvet M."/>
            <person name="La Scola B."/>
            <person name="Holmberg M."/>
            <person name="Andersson S.G.E."/>
        </authorList>
    </citation>
    <scope>NUCLEOTIDE SEQUENCE [LARGE SCALE GENOMIC DNA]</scope>
    <source>
        <strain>ATCC 49882 / DSM 28221 / CCUG 30454 / Houston 1</strain>
    </source>
</reference>
<proteinExistence type="inferred from homology"/>
<accession>Q6G5C9</accession>
<protein>
    <recommendedName>
        <fullName evidence="1">Small ribosomal subunit protein uS2</fullName>
    </recommendedName>
    <alternativeName>
        <fullName evidence="2">30S ribosomal protein S2</fullName>
    </alternativeName>
</protein>
<comment type="similarity">
    <text evidence="1">Belongs to the universal ribosomal protein uS2 family.</text>
</comment>
<organism>
    <name type="scientific">Bartonella henselae (strain ATCC 49882 / DSM 28221 / CCUG 30454 / Houston 1)</name>
    <name type="common">Rochalimaea henselae</name>
    <dbReference type="NCBI Taxonomy" id="283166"/>
    <lineage>
        <taxon>Bacteria</taxon>
        <taxon>Pseudomonadati</taxon>
        <taxon>Pseudomonadota</taxon>
        <taxon>Alphaproteobacteria</taxon>
        <taxon>Hyphomicrobiales</taxon>
        <taxon>Bartonellaceae</taxon>
        <taxon>Bartonella</taxon>
    </lineage>
</organism>
<gene>
    <name evidence="1" type="primary">rpsB</name>
    <name type="ordered locus">BH06220</name>
</gene>